<reference key="1">
    <citation type="submission" date="2008-06" db="EMBL/GenBank/DDBJ databases">
        <title>Lactobacillus casei BL23 complete genome sequence.</title>
        <authorList>
            <person name="Maze A."/>
            <person name="Boel G."/>
            <person name="Bourand A."/>
            <person name="Loux V."/>
            <person name="Gibrat J.F."/>
            <person name="Zuniga M."/>
            <person name="Hartke A."/>
            <person name="Deutscher J."/>
        </authorList>
    </citation>
    <scope>NUCLEOTIDE SEQUENCE [LARGE SCALE GENOMIC DNA]</scope>
    <source>
        <strain>BL23</strain>
    </source>
</reference>
<feature type="chain" id="PRO_1000090753" description="Ribosome-recycling factor">
    <location>
        <begin position="1"/>
        <end position="185"/>
    </location>
</feature>
<organism>
    <name type="scientific">Lacticaseibacillus casei (strain BL23)</name>
    <name type="common">Lactobacillus casei</name>
    <dbReference type="NCBI Taxonomy" id="543734"/>
    <lineage>
        <taxon>Bacteria</taxon>
        <taxon>Bacillati</taxon>
        <taxon>Bacillota</taxon>
        <taxon>Bacilli</taxon>
        <taxon>Lactobacillales</taxon>
        <taxon>Lactobacillaceae</taxon>
        <taxon>Lacticaseibacillus</taxon>
    </lineage>
</organism>
<protein>
    <recommendedName>
        <fullName evidence="1">Ribosome-recycling factor</fullName>
        <shortName evidence="1">RRF</shortName>
    </recommendedName>
    <alternativeName>
        <fullName evidence="1">Ribosome-releasing factor</fullName>
    </alternativeName>
</protein>
<accession>B3WES5</accession>
<evidence type="ECO:0000255" key="1">
    <source>
        <dbReference type="HAMAP-Rule" id="MF_00040"/>
    </source>
</evidence>
<comment type="function">
    <text evidence="1">Responsible for the release of ribosomes from messenger RNA at the termination of protein biosynthesis. May increase the efficiency of translation by recycling ribosomes from one round of translation to another.</text>
</comment>
<comment type="subcellular location">
    <subcellularLocation>
        <location evidence="1">Cytoplasm</location>
    </subcellularLocation>
</comment>
<comment type="similarity">
    <text evidence="1">Belongs to the RRF family.</text>
</comment>
<sequence length="185" mass="20593">MANQIIDQAKVNMGKTEESLQRELGNIRAGRANASLLNQITVEYYGAPTPLNQMAAITIPEPRVLQVSPYDKSSLKNIETALNASDLGINPANDGDVIRLVIPQLTGERRKEIAKEVGKYSESAKIAIRNIRREGLDKLKRQEKDGDITEDDLHRLEKDMQKATDDATKRIDEIAAAKEKEITEV</sequence>
<dbReference type="EMBL" id="FM177140">
    <property type="protein sequence ID" value="CAQ66876.1"/>
    <property type="molecule type" value="Genomic_DNA"/>
</dbReference>
<dbReference type="SMR" id="B3WES5"/>
<dbReference type="KEGG" id="lcb:LCABL_17960"/>
<dbReference type="HOGENOM" id="CLU_073981_2_0_9"/>
<dbReference type="GO" id="GO:0005737">
    <property type="term" value="C:cytoplasm"/>
    <property type="evidence" value="ECO:0007669"/>
    <property type="project" value="UniProtKB-SubCell"/>
</dbReference>
<dbReference type="GO" id="GO:0043023">
    <property type="term" value="F:ribosomal large subunit binding"/>
    <property type="evidence" value="ECO:0007669"/>
    <property type="project" value="TreeGrafter"/>
</dbReference>
<dbReference type="GO" id="GO:0006415">
    <property type="term" value="P:translational termination"/>
    <property type="evidence" value="ECO:0007669"/>
    <property type="project" value="UniProtKB-UniRule"/>
</dbReference>
<dbReference type="CDD" id="cd00520">
    <property type="entry name" value="RRF"/>
    <property type="match status" value="1"/>
</dbReference>
<dbReference type="FunFam" id="1.10.132.20:FF:000001">
    <property type="entry name" value="Ribosome-recycling factor"/>
    <property type="match status" value="1"/>
</dbReference>
<dbReference type="FunFam" id="3.30.1360.40:FF:000001">
    <property type="entry name" value="Ribosome-recycling factor"/>
    <property type="match status" value="1"/>
</dbReference>
<dbReference type="Gene3D" id="3.30.1360.40">
    <property type="match status" value="1"/>
</dbReference>
<dbReference type="Gene3D" id="1.10.132.20">
    <property type="entry name" value="Ribosome-recycling factor"/>
    <property type="match status" value="1"/>
</dbReference>
<dbReference type="HAMAP" id="MF_00040">
    <property type="entry name" value="RRF"/>
    <property type="match status" value="1"/>
</dbReference>
<dbReference type="InterPro" id="IPR002661">
    <property type="entry name" value="Ribosome_recyc_fac"/>
</dbReference>
<dbReference type="InterPro" id="IPR023584">
    <property type="entry name" value="Ribosome_recyc_fac_dom"/>
</dbReference>
<dbReference type="InterPro" id="IPR036191">
    <property type="entry name" value="RRF_sf"/>
</dbReference>
<dbReference type="NCBIfam" id="TIGR00496">
    <property type="entry name" value="frr"/>
    <property type="match status" value="1"/>
</dbReference>
<dbReference type="PANTHER" id="PTHR20982:SF3">
    <property type="entry name" value="MITOCHONDRIAL RIBOSOME RECYCLING FACTOR PSEUDO 1"/>
    <property type="match status" value="1"/>
</dbReference>
<dbReference type="PANTHER" id="PTHR20982">
    <property type="entry name" value="RIBOSOME RECYCLING FACTOR"/>
    <property type="match status" value="1"/>
</dbReference>
<dbReference type="Pfam" id="PF01765">
    <property type="entry name" value="RRF"/>
    <property type="match status" value="1"/>
</dbReference>
<dbReference type="SUPFAM" id="SSF55194">
    <property type="entry name" value="Ribosome recycling factor, RRF"/>
    <property type="match status" value="1"/>
</dbReference>
<name>RRF_LACCB</name>
<keyword id="KW-0963">Cytoplasm</keyword>
<keyword id="KW-0648">Protein biosynthesis</keyword>
<gene>
    <name evidence="1" type="primary">frr</name>
    <name type="ordered locus">LCABL_17960</name>
</gene>
<proteinExistence type="inferred from homology"/>